<name>NDRG3_MOUSE</name>
<reference key="1">
    <citation type="journal article" date="1999" name="Biochem. Biophys. Res. Commun.">
        <title>Identification of new genes ndr2 and ndr3 which are related to Ndr1/RTP/Drg1 but show distinct tissue specificity and response to N-myc.</title>
        <authorList>
            <person name="Okuda T."/>
            <person name="Kondoh H."/>
        </authorList>
    </citation>
    <scope>NUCLEOTIDE SEQUENCE [MRNA]</scope>
    <source>
        <tissue>Embryo</tissue>
    </source>
</reference>
<reference key="2">
    <citation type="journal article" date="2007" name="Proc. Natl. Acad. Sci. U.S.A.">
        <title>Large-scale phosphorylation analysis of mouse liver.</title>
        <authorList>
            <person name="Villen J."/>
            <person name="Beausoleil S.A."/>
            <person name="Gerber S.A."/>
            <person name="Gygi S.P."/>
        </authorList>
    </citation>
    <scope>PHOSPHORYLATION [LARGE SCALE ANALYSIS] AT SER-331; SER-334 AND SER-335</scope>
    <scope>IDENTIFICATION BY MASS SPECTROMETRY [LARGE SCALE ANALYSIS]</scope>
    <source>
        <tissue>Liver</tissue>
    </source>
</reference>
<reference key="3">
    <citation type="journal article" date="2010" name="Cell">
        <title>A tissue-specific atlas of mouse protein phosphorylation and expression.</title>
        <authorList>
            <person name="Huttlin E.L."/>
            <person name="Jedrychowski M.P."/>
            <person name="Elias J.E."/>
            <person name="Goswami T."/>
            <person name="Rad R."/>
            <person name="Beausoleil S.A."/>
            <person name="Villen J."/>
            <person name="Haas W."/>
            <person name="Sowa M.E."/>
            <person name="Gygi S.P."/>
        </authorList>
    </citation>
    <scope>PHOSPHORYLATION [LARGE SCALE ANALYSIS] AT THR-329; SER-331; SER-334; SER-335; SER-338; SER-341 AND SER-361</scope>
    <scope>IDENTIFICATION BY MASS SPECTROMETRY [LARGE SCALE ANALYSIS]</scope>
    <source>
        <tissue>Brain</tissue>
        <tissue>Brown adipose tissue</tissue>
        <tissue>Heart</tissue>
        <tissue>Kidney</tissue>
        <tissue>Liver</tissue>
        <tissue>Lung</tissue>
        <tissue>Pancreas</tissue>
        <tissue>Spleen</tissue>
        <tissue>Testis</tissue>
    </source>
</reference>
<reference key="4">
    <citation type="journal article" date="2011" name="J. Biol. Chem.">
        <title>NDRG4 protein-deficient mice exhibit spatial learning deficits and vulnerabilities to cerebral ischemia.</title>
        <authorList>
            <person name="Yamamoto H."/>
            <person name="Kokame K."/>
            <person name="Okuda T."/>
            <person name="Nakajo Y."/>
            <person name="Yanamoto H."/>
            <person name="Miyata T."/>
        </authorList>
    </citation>
    <scope>TISSUE SPECIFICITY</scope>
</reference>
<dbReference type="EMBL" id="AB033922">
    <property type="protein sequence ID" value="BAA85883.1"/>
    <property type="molecule type" value="mRNA"/>
</dbReference>
<dbReference type="CCDS" id="CCDS16971.1"/>
<dbReference type="RefSeq" id="NP_001342321.1">
    <property type="nucleotide sequence ID" value="NM_001355392.1"/>
</dbReference>
<dbReference type="RefSeq" id="NP_038893.1">
    <property type="nucleotide sequence ID" value="NM_013865.2"/>
</dbReference>
<dbReference type="RefSeq" id="XP_017174456.1">
    <property type="nucleotide sequence ID" value="XM_017318967.1"/>
</dbReference>
<dbReference type="RefSeq" id="XP_017174457.1">
    <property type="nucleotide sequence ID" value="XM_017318968.1"/>
</dbReference>
<dbReference type="RefSeq" id="XP_036018177.1">
    <property type="nucleotide sequence ID" value="XM_036162284.1"/>
</dbReference>
<dbReference type="RefSeq" id="XP_036018178.1">
    <property type="nucleotide sequence ID" value="XM_036162285.1"/>
</dbReference>
<dbReference type="SMR" id="Q9QYF9"/>
<dbReference type="BioGRID" id="205893">
    <property type="interactions" value="4"/>
</dbReference>
<dbReference type="FunCoup" id="Q9QYF9">
    <property type="interactions" value="2011"/>
</dbReference>
<dbReference type="STRING" id="10090.ENSMUSP00000070052"/>
<dbReference type="ESTHER" id="mouse-ndr3">
    <property type="family name" value="Ndr_family"/>
</dbReference>
<dbReference type="GlyGen" id="Q9QYF9">
    <property type="glycosylation" value="3 sites, 2 N-linked glycans (2 sites), 1 O-linked glycan (1 site)"/>
</dbReference>
<dbReference type="iPTMnet" id="Q9QYF9"/>
<dbReference type="PhosphoSitePlus" id="Q9QYF9"/>
<dbReference type="SwissPalm" id="Q9QYF9"/>
<dbReference type="jPOST" id="Q9QYF9"/>
<dbReference type="PaxDb" id="10090-ENSMUSP00000070052"/>
<dbReference type="ProteomicsDB" id="287462"/>
<dbReference type="Pumba" id="Q9QYF9"/>
<dbReference type="Antibodypedia" id="11784">
    <property type="antibodies" value="139 antibodies from 29 providers"/>
</dbReference>
<dbReference type="DNASU" id="29812"/>
<dbReference type="Ensembl" id="ENSMUST00000072298.13">
    <property type="protein sequence ID" value="ENSMUSP00000072144.7"/>
    <property type="gene ID" value="ENSMUSG00000027634.15"/>
</dbReference>
<dbReference type="GeneID" id="29812"/>
<dbReference type="KEGG" id="mmu:29812"/>
<dbReference type="UCSC" id="uc008nof.2">
    <property type="organism name" value="mouse"/>
</dbReference>
<dbReference type="AGR" id="MGI:1352499"/>
<dbReference type="CTD" id="57446"/>
<dbReference type="MGI" id="MGI:1352499">
    <property type="gene designation" value="Ndrg3"/>
</dbReference>
<dbReference type="VEuPathDB" id="HostDB:ENSMUSG00000027634"/>
<dbReference type="eggNOG" id="KOG2931">
    <property type="taxonomic scope" value="Eukaryota"/>
</dbReference>
<dbReference type="GeneTree" id="ENSGT00950000182872"/>
<dbReference type="HOGENOM" id="CLU_035361_1_0_1"/>
<dbReference type="InParanoid" id="Q9QYF9"/>
<dbReference type="OMA" id="ITQYFAV"/>
<dbReference type="OrthoDB" id="741027at2759"/>
<dbReference type="PhylomeDB" id="Q9QYF9"/>
<dbReference type="BioGRID-ORCS" id="29812">
    <property type="hits" value="18 hits in 76 CRISPR screens"/>
</dbReference>
<dbReference type="ChiTaRS" id="Ndrg3">
    <property type="organism name" value="mouse"/>
</dbReference>
<dbReference type="PRO" id="PR:Q9QYF9"/>
<dbReference type="Proteomes" id="UP000000589">
    <property type="component" value="Chromosome 2"/>
</dbReference>
<dbReference type="RNAct" id="Q9QYF9">
    <property type="molecule type" value="protein"/>
</dbReference>
<dbReference type="Bgee" id="ENSMUSG00000027634">
    <property type="expression patterns" value="Expressed in retinal neural layer and 270 other cell types or tissues"/>
</dbReference>
<dbReference type="ExpressionAtlas" id="Q9QYF9">
    <property type="expression patterns" value="baseline and differential"/>
</dbReference>
<dbReference type="GO" id="GO:0005737">
    <property type="term" value="C:cytoplasm"/>
    <property type="evidence" value="ECO:0000250"/>
    <property type="project" value="UniProtKB"/>
</dbReference>
<dbReference type="GO" id="GO:0046697">
    <property type="term" value="P:decidualization"/>
    <property type="evidence" value="ECO:0000315"/>
    <property type="project" value="BHF-UCL"/>
</dbReference>
<dbReference type="FunFam" id="3.40.50.1820:FF:000006">
    <property type="entry name" value="NDRG family member 3"/>
    <property type="match status" value="1"/>
</dbReference>
<dbReference type="Gene3D" id="3.40.50.1820">
    <property type="entry name" value="alpha/beta hydrolase"/>
    <property type="match status" value="1"/>
</dbReference>
<dbReference type="InterPro" id="IPR029058">
    <property type="entry name" value="AB_hydrolase_fold"/>
</dbReference>
<dbReference type="InterPro" id="IPR004142">
    <property type="entry name" value="NDRG"/>
</dbReference>
<dbReference type="PANTHER" id="PTHR11034">
    <property type="entry name" value="N-MYC DOWNSTREAM REGULATED"/>
    <property type="match status" value="1"/>
</dbReference>
<dbReference type="Pfam" id="PF03096">
    <property type="entry name" value="Ndr"/>
    <property type="match status" value="1"/>
</dbReference>
<dbReference type="SUPFAM" id="SSF53474">
    <property type="entry name" value="alpha/beta-Hydrolases"/>
    <property type="match status" value="1"/>
</dbReference>
<evidence type="ECO:0000250" key="1">
    <source>
        <dbReference type="UniProtKB" id="Q9UGV2"/>
    </source>
</evidence>
<evidence type="ECO:0000256" key="2">
    <source>
        <dbReference type="SAM" id="MobiDB-lite"/>
    </source>
</evidence>
<evidence type="ECO:0000269" key="3">
    <source>
    </source>
</evidence>
<evidence type="ECO:0000305" key="4"/>
<evidence type="ECO:0007744" key="5">
    <source>
    </source>
</evidence>
<evidence type="ECO:0007744" key="6">
    <source>
    </source>
</evidence>
<organism>
    <name type="scientific">Mus musculus</name>
    <name type="common">Mouse</name>
    <dbReference type="NCBI Taxonomy" id="10090"/>
    <lineage>
        <taxon>Eukaryota</taxon>
        <taxon>Metazoa</taxon>
        <taxon>Chordata</taxon>
        <taxon>Craniata</taxon>
        <taxon>Vertebrata</taxon>
        <taxon>Euteleostomi</taxon>
        <taxon>Mammalia</taxon>
        <taxon>Eutheria</taxon>
        <taxon>Euarchontoglires</taxon>
        <taxon>Glires</taxon>
        <taxon>Rodentia</taxon>
        <taxon>Myomorpha</taxon>
        <taxon>Muroidea</taxon>
        <taxon>Muridae</taxon>
        <taxon>Murinae</taxon>
        <taxon>Mus</taxon>
        <taxon>Mus</taxon>
    </lineage>
</organism>
<gene>
    <name type="primary">Ndrg3</name>
    <name type="synonym">Ndr3</name>
</gene>
<proteinExistence type="evidence at protein level"/>
<accession>Q9QYF9</accession>
<keyword id="KW-0007">Acetylation</keyword>
<keyword id="KW-0597">Phosphoprotein</keyword>
<keyword id="KW-1185">Reference proteome</keyword>
<comment type="tissue specificity">
    <text evidence="3">Expressed at high levels in brain, followed by small intestine and kidney (at protein level). Also expressed in thymus.</text>
</comment>
<comment type="developmental stage">
    <text>Its expression is already significant at 9.5 dpc, covering the entire embryo except the heart, and it shows only a slight increase in later developmental stages.</text>
</comment>
<comment type="similarity">
    <text evidence="4">Belongs to the NDRG family.</text>
</comment>
<feature type="chain" id="PRO_0000159578" description="Protein NDRG3">
    <location>
        <begin position="1"/>
        <end position="375"/>
    </location>
</feature>
<feature type="region of interest" description="Disordered" evidence="2">
    <location>
        <begin position="326"/>
        <end position="375"/>
    </location>
</feature>
<feature type="compositionally biased region" description="Low complexity" evidence="2">
    <location>
        <begin position="330"/>
        <end position="346"/>
    </location>
</feature>
<feature type="compositionally biased region" description="Polar residues" evidence="2">
    <location>
        <begin position="347"/>
        <end position="359"/>
    </location>
</feature>
<feature type="compositionally biased region" description="Basic and acidic residues" evidence="2">
    <location>
        <begin position="364"/>
        <end position="375"/>
    </location>
</feature>
<feature type="modified residue" description="N-acetylmethionine" evidence="1">
    <location>
        <position position="1"/>
    </location>
</feature>
<feature type="modified residue" description="Phosphothreonine" evidence="1">
    <location>
        <position position="322"/>
    </location>
</feature>
<feature type="modified residue" description="Phosphothreonine" evidence="6">
    <location>
        <position position="329"/>
    </location>
</feature>
<feature type="modified residue" description="Phosphoserine" evidence="5 6">
    <location>
        <position position="331"/>
    </location>
</feature>
<feature type="modified residue" description="Phosphothreonine" evidence="1">
    <location>
        <position position="332"/>
    </location>
</feature>
<feature type="modified residue" description="Phosphoserine" evidence="5 6">
    <location>
        <position position="334"/>
    </location>
</feature>
<feature type="modified residue" description="Phosphoserine" evidence="5 6">
    <location>
        <position position="335"/>
    </location>
</feature>
<feature type="modified residue" description="Phosphoserine" evidence="6">
    <location>
        <position position="338"/>
    </location>
</feature>
<feature type="modified residue" description="Phosphoserine" evidence="6">
    <location>
        <position position="341"/>
    </location>
</feature>
<feature type="modified residue" description="Phosphoserine" evidence="1">
    <location>
        <position position="352"/>
    </location>
</feature>
<feature type="modified residue" description="Phosphothreonine" evidence="1">
    <location>
        <position position="355"/>
    </location>
</feature>
<feature type="modified residue" description="Phosphoserine" evidence="6">
    <location>
        <position position="361"/>
    </location>
</feature>
<feature type="modified residue" description="Phosphoserine" evidence="1">
    <location>
        <position position="374"/>
    </location>
</feature>
<protein>
    <recommendedName>
        <fullName>Protein NDRG3</fullName>
    </recommendedName>
    <alternativeName>
        <fullName>N-myc downstream-regulated gene 3 protein</fullName>
    </alternativeName>
    <alternativeName>
        <fullName>Protein Ndr3</fullName>
    </alternativeName>
</protein>
<sequence length="375" mass="41555">MDELQDVQLTEIKPLLNDKNGTRNFQDFDCQEHDIETPHGMVHVTIRGLPKGNRPVILTYHDIGLNHKSCFNTFFNFEDMQEITQHFAVCHVDAPGQQEAAPSFPTGYQYPTMDELAEMLPPVLTHLSMKSIIGIGVGAGAYILSRFALNHPELVEGLVLINIDPCAKGWIDWAASKLSGFTTNIVDIILAHHFGQEELQANLDLIQTYRLHIAQDINQENLQLFLGSYNGRRDLEIERPILGQNDNRLKTLKCSTLLVVGDNSPAVEAVVECNSRLDPINTTLLKMADCGGLPQVVQPGKLTEAFKYFLQGMGYIPSASMTRLARSRTHSTSSSIGSGESPFSRSVTSNQSDGTQESCESPDVLDRHQTMEVSC</sequence>